<reference key="1">
    <citation type="journal article" date="2001" name="J. Bacteriol.">
        <title>Genome sequence and comparative analysis of the solvent-producing bacterium Clostridium acetobutylicum.</title>
        <authorList>
            <person name="Noelling J."/>
            <person name="Breton G."/>
            <person name="Omelchenko M.V."/>
            <person name="Makarova K.S."/>
            <person name="Zeng Q."/>
            <person name="Gibson R."/>
            <person name="Lee H.M."/>
            <person name="Dubois J."/>
            <person name="Qiu D."/>
            <person name="Hitti J."/>
            <person name="Wolf Y.I."/>
            <person name="Tatusov R.L."/>
            <person name="Sabathe F."/>
            <person name="Doucette-Stamm L.A."/>
            <person name="Soucaille P."/>
            <person name="Daly M.J."/>
            <person name="Bennett G.N."/>
            <person name="Koonin E.V."/>
            <person name="Smith D.R."/>
        </authorList>
    </citation>
    <scope>NUCLEOTIDE SEQUENCE [LARGE SCALE GENOMIC DNA]</scope>
    <source>
        <strain>ATCC 824 / DSM 792 / JCM 1419 / IAM 19013 / LMG 5710 / NBRC 13948 / NRRL B-527 / VKM B-1787 / 2291 / W</strain>
    </source>
</reference>
<reference key="2">
    <citation type="journal article" date="1991" name="Gene">
        <title>Sequence of the lyc gene encoding the autolytic lysozyme of Clostridium acetobutylicum ATCC824: comparison with other lytic enzymes.</title>
        <authorList>
            <person name="Croux C."/>
            <person name="Garcia J.L."/>
        </authorList>
    </citation>
    <scope>NUCLEOTIDE SEQUENCE [GENOMIC DNA] OF 276-398</scope>
    <source>
        <strain>ATCC 824 / DSM 792 / JCM 1419 / IAM 19013 / LMG 5710 / NBRC 13948 / NRRL B-527 / VKM B-1787 / 2291 / W</strain>
    </source>
</reference>
<evidence type="ECO:0000255" key="1"/>
<accession>P35838</accession>
<organism>
    <name type="scientific">Clostridium acetobutylicum (strain ATCC 824 / DSM 792 / JCM 1419 / IAM 19013 / LMG 5710 / NBRC 13948 / NRRL B-527 / VKM B-1787 / 2291 / W)</name>
    <dbReference type="NCBI Taxonomy" id="272562"/>
    <lineage>
        <taxon>Bacteria</taxon>
        <taxon>Bacillati</taxon>
        <taxon>Bacillota</taxon>
        <taxon>Clostridia</taxon>
        <taxon>Eubacteriales</taxon>
        <taxon>Clostridiaceae</taxon>
        <taxon>Clostridium</taxon>
    </lineage>
</organism>
<keyword id="KW-1185">Reference proteome</keyword>
<gene>
    <name type="ordered locus">CA_C0552</name>
</gene>
<proteinExistence type="predicted"/>
<protein>
    <recommendedName>
        <fullName>Uncharacterized protein CA_C0552</fullName>
    </recommendedName>
</protein>
<feature type="chain" id="PRO_0000207111" description="Uncharacterized protein CA_C0552">
    <location>
        <begin position="1"/>
        <end position="398"/>
    </location>
</feature>
<feature type="domain" description="BIG2" evidence="1">
    <location>
        <begin position="240"/>
        <end position="306"/>
    </location>
</feature>
<dbReference type="EMBL" id="AE001437">
    <property type="protein sequence ID" value="AAK78531.1"/>
    <property type="molecule type" value="Genomic_DNA"/>
</dbReference>
<dbReference type="EMBL" id="M68865">
    <property type="status" value="NOT_ANNOTATED_CDS"/>
    <property type="molecule type" value="Genomic_DNA"/>
</dbReference>
<dbReference type="PIR" id="H96967">
    <property type="entry name" value="H96967"/>
</dbReference>
<dbReference type="PIR" id="JH0444">
    <property type="entry name" value="JH0444"/>
</dbReference>
<dbReference type="RefSeq" id="NP_347191.1">
    <property type="nucleotide sequence ID" value="NC_003030.1"/>
</dbReference>
<dbReference type="RefSeq" id="WP_010963873.1">
    <property type="nucleotide sequence ID" value="NC_003030.1"/>
</dbReference>
<dbReference type="SMR" id="P35838"/>
<dbReference type="STRING" id="272562.CA_C0552"/>
<dbReference type="DNASU" id="1116735"/>
<dbReference type="KEGG" id="cac:CA_C0552"/>
<dbReference type="PATRIC" id="fig|272562.8.peg.757"/>
<dbReference type="eggNOG" id="COG5492">
    <property type="taxonomic scope" value="Bacteria"/>
</dbReference>
<dbReference type="HOGENOM" id="CLU_692050_0_0_9"/>
<dbReference type="OrthoDB" id="1927993at2"/>
<dbReference type="Proteomes" id="UP000000814">
    <property type="component" value="Chromosome"/>
</dbReference>
<dbReference type="Gene3D" id="2.60.120.200">
    <property type="match status" value="1"/>
</dbReference>
<dbReference type="Gene3D" id="2.60.40.1080">
    <property type="match status" value="1"/>
</dbReference>
<dbReference type="InterPro" id="IPR003343">
    <property type="entry name" value="Big_2"/>
</dbReference>
<dbReference type="InterPro" id="IPR013320">
    <property type="entry name" value="ConA-like_dom_sf"/>
</dbReference>
<dbReference type="InterPro" id="IPR008964">
    <property type="entry name" value="Invasin/intimin_cell_adhesion"/>
</dbReference>
<dbReference type="Pfam" id="PF02368">
    <property type="entry name" value="Big_2"/>
    <property type="match status" value="1"/>
</dbReference>
<dbReference type="SMART" id="SM00635">
    <property type="entry name" value="BID_2"/>
    <property type="match status" value="1"/>
</dbReference>
<dbReference type="SUPFAM" id="SSF49899">
    <property type="entry name" value="Concanavalin A-like lectins/glucanases"/>
    <property type="match status" value="1"/>
</dbReference>
<dbReference type="SUPFAM" id="SSF49373">
    <property type="entry name" value="Invasin/intimin cell-adhesion fragments"/>
    <property type="match status" value="1"/>
</dbReference>
<sequence>MISDLESLGIDFKDEGENYVPKKDYSGNLVAKYVFDSNGISTDNITLKDLSGHGYDGTMSGVSIKDDSELGKCAYFNGSASVNFNNQIIPKGNKTIIITFKKDSGTQSNGQYEFLIEQGSGQGESITSWSIRFDSYKTACLNNLYFCNDDSKINMLNSHPAVFNVCDGKKHTAIFNYYDNKTNNTYCDSLKAHVCSFDFNGGEYRTADNSIIGQKYVGYIKSIEIYDDVVEFNSISTGTSLNKNIDQLIIGQTDNLVATIMPEDVTDKSVIWSSSDPSIVAVDENGKITALKVGEVSITVTTNDGSNLSQTCMVAVIDTTIPDKACLNISMTNGQVKQYYVGMDLVNKFISWYKLRSAGSEEPFYEFDITQLSEPGILRHDYVVFNKISSFTVDDYVK</sequence>
<name>Y552_CLOAB</name>